<evidence type="ECO:0000255" key="1">
    <source>
        <dbReference type="HAMAP-Rule" id="MF_00148"/>
    </source>
</evidence>
<gene>
    <name evidence="1" type="primary">ung</name>
    <name type="ordered locus">MS0373</name>
</gene>
<accession>Q65VN0</accession>
<dbReference type="EC" id="3.2.2.27" evidence="1"/>
<dbReference type="EMBL" id="AE016827">
    <property type="protein sequence ID" value="AAU36980.1"/>
    <property type="molecule type" value="Genomic_DNA"/>
</dbReference>
<dbReference type="RefSeq" id="WP_011199555.1">
    <property type="nucleotide sequence ID" value="NC_006300.1"/>
</dbReference>
<dbReference type="SMR" id="Q65VN0"/>
<dbReference type="STRING" id="221988.MS0373"/>
<dbReference type="KEGG" id="msu:MS0373"/>
<dbReference type="eggNOG" id="COG0692">
    <property type="taxonomic scope" value="Bacteria"/>
</dbReference>
<dbReference type="HOGENOM" id="CLU_032162_3_0_6"/>
<dbReference type="OrthoDB" id="9804372at2"/>
<dbReference type="Proteomes" id="UP000000607">
    <property type="component" value="Chromosome"/>
</dbReference>
<dbReference type="GO" id="GO:0005737">
    <property type="term" value="C:cytoplasm"/>
    <property type="evidence" value="ECO:0007669"/>
    <property type="project" value="UniProtKB-SubCell"/>
</dbReference>
<dbReference type="GO" id="GO:0004844">
    <property type="term" value="F:uracil DNA N-glycosylase activity"/>
    <property type="evidence" value="ECO:0007669"/>
    <property type="project" value="UniProtKB-UniRule"/>
</dbReference>
<dbReference type="GO" id="GO:0097510">
    <property type="term" value="P:base-excision repair, AP site formation via deaminated base removal"/>
    <property type="evidence" value="ECO:0007669"/>
    <property type="project" value="TreeGrafter"/>
</dbReference>
<dbReference type="CDD" id="cd10027">
    <property type="entry name" value="UDG-F1-like"/>
    <property type="match status" value="1"/>
</dbReference>
<dbReference type="FunFam" id="3.40.470.10:FF:000001">
    <property type="entry name" value="Uracil-DNA glycosylase"/>
    <property type="match status" value="1"/>
</dbReference>
<dbReference type="Gene3D" id="3.40.470.10">
    <property type="entry name" value="Uracil-DNA glycosylase-like domain"/>
    <property type="match status" value="1"/>
</dbReference>
<dbReference type="HAMAP" id="MF_00148">
    <property type="entry name" value="UDG"/>
    <property type="match status" value="1"/>
</dbReference>
<dbReference type="InterPro" id="IPR002043">
    <property type="entry name" value="UDG_fam1"/>
</dbReference>
<dbReference type="InterPro" id="IPR018085">
    <property type="entry name" value="Ura-DNA_Glyclase_AS"/>
</dbReference>
<dbReference type="InterPro" id="IPR005122">
    <property type="entry name" value="Uracil-DNA_glycosylase-like"/>
</dbReference>
<dbReference type="InterPro" id="IPR036895">
    <property type="entry name" value="Uracil-DNA_glycosylase-like_sf"/>
</dbReference>
<dbReference type="NCBIfam" id="NF003588">
    <property type="entry name" value="PRK05254.1-1"/>
    <property type="match status" value="1"/>
</dbReference>
<dbReference type="NCBIfam" id="NF003589">
    <property type="entry name" value="PRK05254.1-2"/>
    <property type="match status" value="1"/>
</dbReference>
<dbReference type="NCBIfam" id="NF003591">
    <property type="entry name" value="PRK05254.1-4"/>
    <property type="match status" value="1"/>
</dbReference>
<dbReference type="NCBIfam" id="NF003592">
    <property type="entry name" value="PRK05254.1-5"/>
    <property type="match status" value="1"/>
</dbReference>
<dbReference type="NCBIfam" id="TIGR00628">
    <property type="entry name" value="ung"/>
    <property type="match status" value="1"/>
</dbReference>
<dbReference type="PANTHER" id="PTHR11264">
    <property type="entry name" value="URACIL-DNA GLYCOSYLASE"/>
    <property type="match status" value="1"/>
</dbReference>
<dbReference type="PANTHER" id="PTHR11264:SF0">
    <property type="entry name" value="URACIL-DNA GLYCOSYLASE"/>
    <property type="match status" value="1"/>
</dbReference>
<dbReference type="Pfam" id="PF03167">
    <property type="entry name" value="UDG"/>
    <property type="match status" value="1"/>
</dbReference>
<dbReference type="SMART" id="SM00986">
    <property type="entry name" value="UDG"/>
    <property type="match status" value="1"/>
</dbReference>
<dbReference type="SMART" id="SM00987">
    <property type="entry name" value="UreE_C"/>
    <property type="match status" value="1"/>
</dbReference>
<dbReference type="SUPFAM" id="SSF52141">
    <property type="entry name" value="Uracil-DNA glycosylase-like"/>
    <property type="match status" value="1"/>
</dbReference>
<dbReference type="PROSITE" id="PS00130">
    <property type="entry name" value="U_DNA_GLYCOSYLASE"/>
    <property type="match status" value="1"/>
</dbReference>
<feature type="chain" id="PRO_1000009909" description="Uracil-DNA glycosylase">
    <location>
        <begin position="1"/>
        <end position="224"/>
    </location>
</feature>
<feature type="active site" description="Proton acceptor" evidence="1">
    <location>
        <position position="61"/>
    </location>
</feature>
<name>UNG_MANSM</name>
<comment type="function">
    <text evidence="1">Excises uracil residues from the DNA which can arise as a result of misincorporation of dUMP residues by DNA polymerase or due to deamination of cytosine.</text>
</comment>
<comment type="catalytic activity">
    <reaction evidence="1">
        <text>Hydrolyzes single-stranded DNA or mismatched double-stranded DNA and polynucleotides, releasing free uracil.</text>
        <dbReference type="EC" id="3.2.2.27"/>
    </reaction>
</comment>
<comment type="subcellular location">
    <subcellularLocation>
        <location evidence="1">Cytoplasm</location>
    </subcellularLocation>
</comment>
<comment type="similarity">
    <text evidence="1">Belongs to the uracil-DNA glycosylase (UDG) superfamily. UNG family.</text>
</comment>
<organism>
    <name type="scientific">Mannheimia succiniciproducens (strain KCTC 0769BP / MBEL55E)</name>
    <dbReference type="NCBI Taxonomy" id="221988"/>
    <lineage>
        <taxon>Bacteria</taxon>
        <taxon>Pseudomonadati</taxon>
        <taxon>Pseudomonadota</taxon>
        <taxon>Gammaproteobacteria</taxon>
        <taxon>Pasteurellales</taxon>
        <taxon>Pasteurellaceae</taxon>
        <taxon>Basfia</taxon>
    </lineage>
</organism>
<protein>
    <recommendedName>
        <fullName evidence="1">Uracil-DNA glycosylase</fullName>
        <shortName evidence="1">UDG</shortName>
        <ecNumber evidence="1">3.2.2.27</ecNumber>
    </recommendedName>
</protein>
<reference key="1">
    <citation type="journal article" date="2004" name="Nat. Biotechnol.">
        <title>The genome sequence of the capnophilic rumen bacterium Mannheimia succiniciproducens.</title>
        <authorList>
            <person name="Hong S.H."/>
            <person name="Kim J.S."/>
            <person name="Lee S.Y."/>
            <person name="In Y.H."/>
            <person name="Choi S.S."/>
            <person name="Rih J.-K."/>
            <person name="Kim C.H."/>
            <person name="Jeong H."/>
            <person name="Hur C.G."/>
            <person name="Kim J.J."/>
        </authorList>
    </citation>
    <scope>NUCLEOTIDE SEQUENCE [LARGE SCALE GENOMIC DNA]</scope>
    <source>
        <strain>KCTC 0769BP / MBEL55E</strain>
    </source>
</reference>
<sequence length="224" mass="25516">MQTWKDVIGTEKTQPYFQHILQQVHAARDAGKTIYPPQHDVFNAFKLTEFDQVKVVILGQDPYHGPNQAHGLAFSVLPGIVPPPSLLNIYKELENDIAGFQIPRHGYLVKWAEQGVLLLNTVLTVERGLAHSHANFGWETFTDRVIAALNRHRENLVFLLWGSHAQKKGQFIDRDRHCVLTAPHPSPLSAHRGFLGCHHFSKANNYLQEHKITEIDWQLDTQLS</sequence>
<keyword id="KW-0963">Cytoplasm</keyword>
<keyword id="KW-0227">DNA damage</keyword>
<keyword id="KW-0234">DNA repair</keyword>
<keyword id="KW-0378">Hydrolase</keyword>
<proteinExistence type="inferred from homology"/>